<proteinExistence type="inferred from homology"/>
<evidence type="ECO:0000255" key="1">
    <source>
        <dbReference type="HAMAP-Rule" id="MF_01849"/>
    </source>
</evidence>
<evidence type="ECO:0000255" key="2">
    <source>
        <dbReference type="PROSITE-ProRule" id="PRU01266"/>
    </source>
</evidence>
<accession>B1ZQZ5</accession>
<gene>
    <name evidence="1" type="primary">rlmN1</name>
    <name type="ordered locus">Oter_0372</name>
</gene>
<protein>
    <recommendedName>
        <fullName evidence="1">Probable dual-specificity RNA methyltransferase RlmN 1</fullName>
        <ecNumber evidence="1">2.1.1.192</ecNumber>
    </recommendedName>
    <alternativeName>
        <fullName evidence="1">23S rRNA (adenine(2503)-C(2))-methyltransferase 1</fullName>
    </alternativeName>
    <alternativeName>
        <fullName evidence="1">23S rRNA m2A2503 methyltransferase 1</fullName>
    </alternativeName>
    <alternativeName>
        <fullName evidence="1">Ribosomal RNA large subunit methyltransferase N 1</fullName>
    </alternativeName>
    <alternativeName>
        <fullName evidence="1">tRNA (adenine(37)-C(2))-methyltransferase 1</fullName>
    </alternativeName>
    <alternativeName>
        <fullName evidence="1">tRNA m2A37 methyltransferase 1</fullName>
    </alternativeName>
</protein>
<dbReference type="EC" id="2.1.1.192" evidence="1"/>
<dbReference type="EMBL" id="CP001032">
    <property type="protein sequence ID" value="ACB73662.1"/>
    <property type="molecule type" value="Genomic_DNA"/>
</dbReference>
<dbReference type="RefSeq" id="WP_012373200.1">
    <property type="nucleotide sequence ID" value="NC_010571.1"/>
</dbReference>
<dbReference type="SMR" id="B1ZQZ5"/>
<dbReference type="STRING" id="452637.Oter_0372"/>
<dbReference type="KEGG" id="ote:Oter_0372"/>
<dbReference type="eggNOG" id="COG0820">
    <property type="taxonomic scope" value="Bacteria"/>
</dbReference>
<dbReference type="HOGENOM" id="CLU_029101_0_1_0"/>
<dbReference type="OrthoDB" id="9793973at2"/>
<dbReference type="Proteomes" id="UP000007013">
    <property type="component" value="Chromosome"/>
</dbReference>
<dbReference type="GO" id="GO:0005737">
    <property type="term" value="C:cytoplasm"/>
    <property type="evidence" value="ECO:0007669"/>
    <property type="project" value="UniProtKB-SubCell"/>
</dbReference>
<dbReference type="GO" id="GO:0051539">
    <property type="term" value="F:4 iron, 4 sulfur cluster binding"/>
    <property type="evidence" value="ECO:0007669"/>
    <property type="project" value="UniProtKB-UniRule"/>
</dbReference>
<dbReference type="GO" id="GO:0046872">
    <property type="term" value="F:metal ion binding"/>
    <property type="evidence" value="ECO:0007669"/>
    <property type="project" value="UniProtKB-KW"/>
</dbReference>
<dbReference type="GO" id="GO:0070040">
    <property type="term" value="F:rRNA (adenine(2503)-C2-)-methyltransferase activity"/>
    <property type="evidence" value="ECO:0007669"/>
    <property type="project" value="UniProtKB-UniRule"/>
</dbReference>
<dbReference type="GO" id="GO:0019843">
    <property type="term" value="F:rRNA binding"/>
    <property type="evidence" value="ECO:0007669"/>
    <property type="project" value="UniProtKB-UniRule"/>
</dbReference>
<dbReference type="GO" id="GO:0002935">
    <property type="term" value="F:tRNA (adenine(37)-C2)-methyltransferase activity"/>
    <property type="evidence" value="ECO:0007669"/>
    <property type="project" value="UniProtKB-UniRule"/>
</dbReference>
<dbReference type="GO" id="GO:0000049">
    <property type="term" value="F:tRNA binding"/>
    <property type="evidence" value="ECO:0007669"/>
    <property type="project" value="UniProtKB-UniRule"/>
</dbReference>
<dbReference type="GO" id="GO:0070475">
    <property type="term" value="P:rRNA base methylation"/>
    <property type="evidence" value="ECO:0007669"/>
    <property type="project" value="UniProtKB-UniRule"/>
</dbReference>
<dbReference type="GO" id="GO:0030488">
    <property type="term" value="P:tRNA methylation"/>
    <property type="evidence" value="ECO:0007669"/>
    <property type="project" value="UniProtKB-UniRule"/>
</dbReference>
<dbReference type="CDD" id="cd01335">
    <property type="entry name" value="Radical_SAM"/>
    <property type="match status" value="1"/>
</dbReference>
<dbReference type="Gene3D" id="3.20.20.70">
    <property type="entry name" value="Aldolase class I"/>
    <property type="match status" value="1"/>
</dbReference>
<dbReference type="HAMAP" id="MF_01849">
    <property type="entry name" value="RNA_methyltr_RlmN"/>
    <property type="match status" value="1"/>
</dbReference>
<dbReference type="InterPro" id="IPR013785">
    <property type="entry name" value="Aldolase_TIM"/>
</dbReference>
<dbReference type="InterPro" id="IPR040072">
    <property type="entry name" value="Methyltransferase_A"/>
</dbReference>
<dbReference type="InterPro" id="IPR027492">
    <property type="entry name" value="RNA_MTrfase_RlmN"/>
</dbReference>
<dbReference type="InterPro" id="IPR004383">
    <property type="entry name" value="rRNA_lsu_MTrfase_RlmN/Cfr"/>
</dbReference>
<dbReference type="InterPro" id="IPR007197">
    <property type="entry name" value="rSAM"/>
</dbReference>
<dbReference type="NCBIfam" id="TIGR00048">
    <property type="entry name" value="rRNA_mod_RlmN"/>
    <property type="match status" value="1"/>
</dbReference>
<dbReference type="PANTHER" id="PTHR30544">
    <property type="entry name" value="23S RRNA METHYLTRANSFERASE"/>
    <property type="match status" value="1"/>
</dbReference>
<dbReference type="PANTHER" id="PTHR30544:SF5">
    <property type="entry name" value="RADICAL SAM CORE DOMAIN-CONTAINING PROTEIN"/>
    <property type="match status" value="1"/>
</dbReference>
<dbReference type="Pfam" id="PF04055">
    <property type="entry name" value="Radical_SAM"/>
    <property type="match status" value="1"/>
</dbReference>
<dbReference type="PIRSF" id="PIRSF006004">
    <property type="entry name" value="CHP00048"/>
    <property type="match status" value="1"/>
</dbReference>
<dbReference type="SFLD" id="SFLDF00275">
    <property type="entry name" value="adenosine_C2_methyltransferase"/>
    <property type="match status" value="1"/>
</dbReference>
<dbReference type="SFLD" id="SFLDS00029">
    <property type="entry name" value="Radical_SAM"/>
    <property type="match status" value="1"/>
</dbReference>
<dbReference type="SUPFAM" id="SSF102114">
    <property type="entry name" value="Radical SAM enzymes"/>
    <property type="match status" value="1"/>
</dbReference>
<dbReference type="PROSITE" id="PS51918">
    <property type="entry name" value="RADICAL_SAM"/>
    <property type="match status" value="1"/>
</dbReference>
<comment type="function">
    <text evidence="1">Specifically methylates position 2 of adenine 2503 in 23S rRNA and position 2 of adenine 37 in tRNAs.</text>
</comment>
<comment type="catalytic activity">
    <reaction evidence="1">
        <text>adenosine(2503) in 23S rRNA + 2 reduced [2Fe-2S]-[ferredoxin] + 2 S-adenosyl-L-methionine = 2-methyladenosine(2503) in 23S rRNA + 5'-deoxyadenosine + L-methionine + 2 oxidized [2Fe-2S]-[ferredoxin] + S-adenosyl-L-homocysteine</text>
        <dbReference type="Rhea" id="RHEA:42916"/>
        <dbReference type="Rhea" id="RHEA-COMP:10000"/>
        <dbReference type="Rhea" id="RHEA-COMP:10001"/>
        <dbReference type="Rhea" id="RHEA-COMP:10152"/>
        <dbReference type="Rhea" id="RHEA-COMP:10282"/>
        <dbReference type="ChEBI" id="CHEBI:17319"/>
        <dbReference type="ChEBI" id="CHEBI:33737"/>
        <dbReference type="ChEBI" id="CHEBI:33738"/>
        <dbReference type="ChEBI" id="CHEBI:57844"/>
        <dbReference type="ChEBI" id="CHEBI:57856"/>
        <dbReference type="ChEBI" id="CHEBI:59789"/>
        <dbReference type="ChEBI" id="CHEBI:74411"/>
        <dbReference type="ChEBI" id="CHEBI:74497"/>
        <dbReference type="EC" id="2.1.1.192"/>
    </reaction>
</comment>
<comment type="catalytic activity">
    <reaction evidence="1">
        <text>adenosine(37) in tRNA + 2 reduced [2Fe-2S]-[ferredoxin] + 2 S-adenosyl-L-methionine = 2-methyladenosine(37) in tRNA + 5'-deoxyadenosine + L-methionine + 2 oxidized [2Fe-2S]-[ferredoxin] + S-adenosyl-L-homocysteine</text>
        <dbReference type="Rhea" id="RHEA:43332"/>
        <dbReference type="Rhea" id="RHEA-COMP:10000"/>
        <dbReference type="Rhea" id="RHEA-COMP:10001"/>
        <dbReference type="Rhea" id="RHEA-COMP:10162"/>
        <dbReference type="Rhea" id="RHEA-COMP:10485"/>
        <dbReference type="ChEBI" id="CHEBI:17319"/>
        <dbReference type="ChEBI" id="CHEBI:33737"/>
        <dbReference type="ChEBI" id="CHEBI:33738"/>
        <dbReference type="ChEBI" id="CHEBI:57844"/>
        <dbReference type="ChEBI" id="CHEBI:57856"/>
        <dbReference type="ChEBI" id="CHEBI:59789"/>
        <dbReference type="ChEBI" id="CHEBI:74411"/>
        <dbReference type="ChEBI" id="CHEBI:74497"/>
        <dbReference type="EC" id="2.1.1.192"/>
    </reaction>
</comment>
<comment type="cofactor">
    <cofactor evidence="1">
        <name>[4Fe-4S] cluster</name>
        <dbReference type="ChEBI" id="CHEBI:49883"/>
    </cofactor>
    <text evidence="1">Binds 1 [4Fe-4S] cluster. The cluster is coordinated with 3 cysteines and an exchangeable S-adenosyl-L-methionine.</text>
</comment>
<comment type="subcellular location">
    <subcellularLocation>
        <location evidence="1">Cytoplasm</location>
    </subcellularLocation>
</comment>
<comment type="miscellaneous">
    <text evidence="1">Reaction proceeds by a ping-pong mechanism involving intermediate methylation of a conserved cysteine residue.</text>
</comment>
<comment type="similarity">
    <text evidence="1">Belongs to the radical SAM superfamily. RlmN family.</text>
</comment>
<name>RLMN1_OPITP</name>
<keyword id="KW-0004">4Fe-4S</keyword>
<keyword id="KW-0963">Cytoplasm</keyword>
<keyword id="KW-1015">Disulfide bond</keyword>
<keyword id="KW-0408">Iron</keyword>
<keyword id="KW-0411">Iron-sulfur</keyword>
<keyword id="KW-0479">Metal-binding</keyword>
<keyword id="KW-0489">Methyltransferase</keyword>
<keyword id="KW-1185">Reference proteome</keyword>
<keyword id="KW-0698">rRNA processing</keyword>
<keyword id="KW-0949">S-adenosyl-L-methionine</keyword>
<keyword id="KW-0808">Transferase</keyword>
<keyword id="KW-0819">tRNA processing</keyword>
<organism>
    <name type="scientific">Opitutus terrae (strain DSM 11246 / JCM 15787 / PB90-1)</name>
    <dbReference type="NCBI Taxonomy" id="452637"/>
    <lineage>
        <taxon>Bacteria</taxon>
        <taxon>Pseudomonadati</taxon>
        <taxon>Verrucomicrobiota</taxon>
        <taxon>Opitutia</taxon>
        <taxon>Opitutales</taxon>
        <taxon>Opitutaceae</taxon>
        <taxon>Opitutus</taxon>
    </lineage>
</organism>
<feature type="chain" id="PRO_0000350294" description="Probable dual-specificity RNA methyltransferase RlmN 1">
    <location>
        <begin position="1"/>
        <end position="355"/>
    </location>
</feature>
<feature type="domain" description="Radical SAM core" evidence="2">
    <location>
        <begin position="99"/>
        <end position="336"/>
    </location>
</feature>
<feature type="active site" description="Proton acceptor" evidence="1">
    <location>
        <position position="91"/>
    </location>
</feature>
<feature type="active site" description="S-methylcysteine intermediate" evidence="1">
    <location>
        <position position="341"/>
    </location>
</feature>
<feature type="binding site" evidence="1">
    <location>
        <position position="113"/>
    </location>
    <ligand>
        <name>[4Fe-4S] cluster</name>
        <dbReference type="ChEBI" id="CHEBI:49883"/>
        <note>4Fe-4S-S-AdoMet</note>
    </ligand>
</feature>
<feature type="binding site" evidence="1">
    <location>
        <position position="117"/>
    </location>
    <ligand>
        <name>[4Fe-4S] cluster</name>
        <dbReference type="ChEBI" id="CHEBI:49883"/>
        <note>4Fe-4S-S-AdoMet</note>
    </ligand>
</feature>
<feature type="binding site" evidence="1">
    <location>
        <position position="120"/>
    </location>
    <ligand>
        <name>[4Fe-4S] cluster</name>
        <dbReference type="ChEBI" id="CHEBI:49883"/>
        <note>4Fe-4S-S-AdoMet</note>
    </ligand>
</feature>
<feature type="binding site" evidence="1">
    <location>
        <begin position="163"/>
        <end position="164"/>
    </location>
    <ligand>
        <name>S-adenosyl-L-methionine</name>
        <dbReference type="ChEBI" id="CHEBI:59789"/>
    </ligand>
</feature>
<feature type="binding site" evidence="1">
    <location>
        <position position="195"/>
    </location>
    <ligand>
        <name>S-adenosyl-L-methionine</name>
        <dbReference type="ChEBI" id="CHEBI:59789"/>
    </ligand>
</feature>
<feature type="binding site" evidence="1">
    <location>
        <begin position="218"/>
        <end position="220"/>
    </location>
    <ligand>
        <name>S-adenosyl-L-methionine</name>
        <dbReference type="ChEBI" id="CHEBI:59789"/>
    </ligand>
</feature>
<feature type="binding site" evidence="1">
    <location>
        <position position="294"/>
    </location>
    <ligand>
        <name>S-adenosyl-L-methionine</name>
        <dbReference type="ChEBI" id="CHEBI:59789"/>
    </ligand>
</feature>
<feature type="disulfide bond" description="(transient)" evidence="1">
    <location>
        <begin position="106"/>
        <end position="341"/>
    </location>
</feature>
<reference key="1">
    <citation type="journal article" date="2011" name="J. Bacteriol.">
        <title>Genome sequence of the verrucomicrobium Opitutus terrae PB90-1, an abundant inhabitant of rice paddy soil ecosystems.</title>
        <authorList>
            <person name="van Passel M.W."/>
            <person name="Kant R."/>
            <person name="Palva A."/>
            <person name="Copeland A."/>
            <person name="Lucas S."/>
            <person name="Lapidus A."/>
            <person name="Glavina del Rio T."/>
            <person name="Pitluck S."/>
            <person name="Goltsman E."/>
            <person name="Clum A."/>
            <person name="Sun H."/>
            <person name="Schmutz J."/>
            <person name="Larimer F.W."/>
            <person name="Land M.L."/>
            <person name="Hauser L."/>
            <person name="Kyrpides N."/>
            <person name="Mikhailova N."/>
            <person name="Richardson P.P."/>
            <person name="Janssen P.H."/>
            <person name="de Vos W.M."/>
            <person name="Smidt H."/>
        </authorList>
    </citation>
    <scope>NUCLEOTIDE SEQUENCE [LARGE SCALE GENOMIC DNA]</scope>
    <source>
        <strain>DSM 11246 / JCM 15787 / PB90-1</strain>
    </source>
</reference>
<sequence length="355" mass="37988">MRPSLAELSVDDLASVLAQWGYKRSHAGRVLREYYARCGELTEAGRPWPAGLLERLRIEFAPGGTALAARQVAADGTTKLLLRLADGRTVEAVLMPDYRADRAAGCLSSQVGCAMGCDFCATAQSGFERNLTAGEMVEQFLALRREAASAGRKLQTVVFMGMGEPLLNLDAVLTAVRRIADNTYGGLGWRQVTVSTVGLVPGIDALTAADLGINLAVSLHAPDDATRAALLPAGRRFAIADILAAVDRFQASRGRPVIIQYCLLKGVNDSAAHARMLAAVIGSRRMHVNLLHYNPTGLSLRGVRYEPSGDEAAAQFLAELRARGVVTHLRRSRGPDIDAACGQLRAKRGELSVQS</sequence>